<evidence type="ECO:0000250" key="1"/>
<evidence type="ECO:0000255" key="2"/>
<evidence type="ECO:0000269" key="3">
    <source>
    </source>
</evidence>
<evidence type="ECO:0000305" key="4"/>
<comment type="function">
    <text evidence="1 3">CRISPR (clustered regularly interspaced short palindromic repeat), is an adaptive immune system that provides protection against mobile genetic elements (viruses, transposable elements and conjugative plasmids). CRISPR clusters contain sequences complementary to antecedent mobile elements and target invading nucleic acids. CRISPR clusters are transcribed and processed into CRISPR RNA (crRNA). Involved in the integration of spacer DNA into the CRISPR cassette (By similarity). Functions as a ssRNA-specific endoribonuclease.</text>
</comment>
<comment type="cofactor">
    <cofactor evidence="1">
        <name>Mg(2+)</name>
        <dbReference type="ChEBI" id="CHEBI:18420"/>
    </cofactor>
</comment>
<comment type="subunit">
    <text evidence="1">Homodimer, forms a heterotetramer with a Cas1 homodimer.</text>
</comment>
<comment type="similarity">
    <text evidence="4">Belongs to the CRISPR-associated endoribonuclease Cas2 protein family.</text>
</comment>
<organism>
    <name type="scientific">Methanothermobacter thermautotrophicus (strain ATCC 29096 / DSM 1053 / JCM 10044 / NBRC 100330 / Delta H)</name>
    <name type="common">Methanobacterium thermoautotrophicum</name>
    <dbReference type="NCBI Taxonomy" id="187420"/>
    <lineage>
        <taxon>Archaea</taxon>
        <taxon>Methanobacteriati</taxon>
        <taxon>Methanobacteriota</taxon>
        <taxon>Methanomada group</taxon>
        <taxon>Methanobacteria</taxon>
        <taxon>Methanobacteriales</taxon>
        <taxon>Methanobacteriaceae</taxon>
        <taxon>Methanothermobacter</taxon>
    </lineage>
</organism>
<accession>O27155</accession>
<protein>
    <recommendedName>
        <fullName>CRISPR-associated endoribonuclease Cas2</fullName>
        <ecNumber>3.1.-.-</ecNumber>
    </recommendedName>
</protein>
<name>CAS2_METTH</name>
<feature type="chain" id="PRO_0000416950" description="CRISPR-associated endoribonuclease Cas2">
    <location>
        <begin position="1"/>
        <end position="91"/>
    </location>
</feature>
<feature type="binding site" evidence="2">
    <location>
        <position position="12"/>
    </location>
    <ligand>
        <name>Mg(2+)</name>
        <dbReference type="ChEBI" id="CHEBI:18420"/>
        <note>catalytic</note>
    </ligand>
</feature>
<dbReference type="EC" id="3.1.-.-"/>
<dbReference type="EMBL" id="AE000666">
    <property type="protein sequence ID" value="AAB85572.1"/>
    <property type="molecule type" value="Genomic_DNA"/>
</dbReference>
<dbReference type="PIR" id="H69010">
    <property type="entry name" value="H69010"/>
</dbReference>
<dbReference type="SMR" id="O27155"/>
<dbReference type="STRING" id="187420.MTH_1083"/>
<dbReference type="PaxDb" id="187420-MTH_1083"/>
<dbReference type="EnsemblBacteria" id="AAB85572">
    <property type="protein sequence ID" value="AAB85572"/>
    <property type="gene ID" value="MTH_1083"/>
</dbReference>
<dbReference type="KEGG" id="mth:MTH_1083"/>
<dbReference type="PATRIC" id="fig|187420.15.peg.1061"/>
<dbReference type="HOGENOM" id="CLU_161124_0_1_2"/>
<dbReference type="InParanoid" id="O27155"/>
<dbReference type="Proteomes" id="UP000005223">
    <property type="component" value="Chromosome"/>
</dbReference>
<dbReference type="GO" id="GO:0046872">
    <property type="term" value="F:metal ion binding"/>
    <property type="evidence" value="ECO:0007669"/>
    <property type="project" value="UniProtKB-UniRule"/>
</dbReference>
<dbReference type="GO" id="GO:0004521">
    <property type="term" value="F:RNA endonuclease activity"/>
    <property type="evidence" value="ECO:0007669"/>
    <property type="project" value="InterPro"/>
</dbReference>
<dbReference type="GO" id="GO:0051607">
    <property type="term" value="P:defense response to virus"/>
    <property type="evidence" value="ECO:0007669"/>
    <property type="project" value="UniProtKB-UniRule"/>
</dbReference>
<dbReference type="GO" id="GO:0043571">
    <property type="term" value="P:maintenance of CRISPR repeat elements"/>
    <property type="evidence" value="ECO:0007669"/>
    <property type="project" value="UniProtKB-UniRule"/>
</dbReference>
<dbReference type="CDD" id="cd09725">
    <property type="entry name" value="Cas2_I_II_III"/>
    <property type="match status" value="1"/>
</dbReference>
<dbReference type="Gene3D" id="3.30.70.240">
    <property type="match status" value="1"/>
</dbReference>
<dbReference type="HAMAP" id="MF_01471">
    <property type="entry name" value="Cas2"/>
    <property type="match status" value="1"/>
</dbReference>
<dbReference type="InterPro" id="IPR021127">
    <property type="entry name" value="CRISPR_associated_Cas2"/>
</dbReference>
<dbReference type="InterPro" id="IPR019199">
    <property type="entry name" value="Virulence_VapD/CRISPR_Cas2"/>
</dbReference>
<dbReference type="NCBIfam" id="TIGR01573">
    <property type="entry name" value="cas2"/>
    <property type="match status" value="1"/>
</dbReference>
<dbReference type="PANTHER" id="PTHR34405">
    <property type="entry name" value="CRISPR-ASSOCIATED ENDORIBONUCLEASE CAS2"/>
    <property type="match status" value="1"/>
</dbReference>
<dbReference type="PANTHER" id="PTHR34405:SF1">
    <property type="entry name" value="CRISPR-ASSOCIATED ENDORIBONUCLEASE CAS2"/>
    <property type="match status" value="1"/>
</dbReference>
<dbReference type="Pfam" id="PF09827">
    <property type="entry name" value="CRISPR_Cas2"/>
    <property type="match status" value="1"/>
</dbReference>
<dbReference type="SUPFAM" id="SSF143430">
    <property type="entry name" value="TTP0101/SSO1404-like"/>
    <property type="match status" value="1"/>
</dbReference>
<sequence length="91" mass="10802">MVVTVYLLIVYDVGVERVNRVKSYLRTELHWVQNSVFEGEVTESQFRRIETNLERIIDRERDSVIIYSFRSERAMNRNVLGLEKSPLDVIL</sequence>
<gene>
    <name type="primary">cas2</name>
    <name type="ordered locus">MTH_1083</name>
</gene>
<keyword id="KW-0051">Antiviral defense</keyword>
<keyword id="KW-0255">Endonuclease</keyword>
<keyword id="KW-0378">Hydrolase</keyword>
<keyword id="KW-0460">Magnesium</keyword>
<keyword id="KW-0479">Metal-binding</keyword>
<keyword id="KW-0540">Nuclease</keyword>
<keyword id="KW-1185">Reference proteome</keyword>
<reference key="1">
    <citation type="journal article" date="1997" name="J. Bacteriol.">
        <title>Complete genome sequence of Methanobacterium thermoautotrophicum deltaH: functional analysis and comparative genomics.</title>
        <authorList>
            <person name="Smith D.R."/>
            <person name="Doucette-Stamm L.A."/>
            <person name="Deloughery C."/>
            <person name="Lee H.-M."/>
            <person name="Dubois J."/>
            <person name="Aldredge T."/>
            <person name="Bashirzadeh R."/>
            <person name="Blakely D."/>
            <person name="Cook R."/>
            <person name="Gilbert K."/>
            <person name="Harrison D."/>
            <person name="Hoang L."/>
            <person name="Keagle P."/>
            <person name="Lumm W."/>
            <person name="Pothier B."/>
            <person name="Qiu D."/>
            <person name="Spadafora R."/>
            <person name="Vicare R."/>
            <person name="Wang Y."/>
            <person name="Wierzbowski J."/>
            <person name="Gibson R."/>
            <person name="Jiwani N."/>
            <person name="Caruso A."/>
            <person name="Bush D."/>
            <person name="Safer H."/>
            <person name="Patwell D."/>
            <person name="Prabhakar S."/>
            <person name="McDougall S."/>
            <person name="Shimer G."/>
            <person name="Goyal A."/>
            <person name="Pietrovski S."/>
            <person name="Church G.M."/>
            <person name="Daniels C.J."/>
            <person name="Mao J.-I."/>
            <person name="Rice P."/>
            <person name="Noelling J."/>
            <person name="Reeve J.N."/>
        </authorList>
    </citation>
    <scope>NUCLEOTIDE SEQUENCE [LARGE SCALE GENOMIC DNA]</scope>
    <source>
        <strain>ATCC 29096 / DSM 1053 / JCM 10044 / NBRC 100330 / Delta H</strain>
    </source>
</reference>
<reference key="2">
    <citation type="journal article" date="2008" name="J. Biol. Chem.">
        <title>A novel family of sequence-specific endoribonucleases associated with the clustered regularly interspaced short palindromic repeats.</title>
        <authorList>
            <person name="Beloglazova N."/>
            <person name="Brown G."/>
            <person name="Zimmerman M.D."/>
            <person name="Proudfoot M."/>
            <person name="Makarova K.S."/>
            <person name="Kudritska M."/>
            <person name="Kochinyan S."/>
            <person name="Wang S."/>
            <person name="Chruszcz M."/>
            <person name="Minor W."/>
            <person name="Koonin E.V."/>
            <person name="Edwards A.M."/>
            <person name="Savchenko A."/>
            <person name="Yakunin A.F."/>
        </authorList>
    </citation>
    <scope>FUNCTION AS A SSRNA-SPECIFIC ENDORIBONUCLEASE</scope>
    <source>
        <strain>ATCC 29096 / DSM 1053 / JCM 10044 / NBRC 100330 / Delta H</strain>
    </source>
</reference>
<proteinExistence type="evidence at protein level"/>